<dbReference type="EMBL" id="AF394555">
    <property type="protein sequence ID" value="AAL24491.1"/>
    <property type="molecule type" value="Genomic_DNA"/>
</dbReference>
<dbReference type="EMBL" id="DQ061061">
    <property type="protein sequence ID" value="AAY63552.1"/>
    <property type="molecule type" value="mRNA"/>
</dbReference>
<dbReference type="EMBL" id="AC105730">
    <property type="protein sequence ID" value="AAM51839.1"/>
    <property type="status" value="ALT_SEQ"/>
    <property type="molecule type" value="Genomic_DNA"/>
</dbReference>
<dbReference type="EMBL" id="DP000009">
    <property type="protein sequence ID" value="ABF94057.1"/>
    <property type="molecule type" value="Genomic_DNA"/>
</dbReference>
<dbReference type="EMBL" id="AP008209">
    <property type="protein sequence ID" value="BAF10922.1"/>
    <property type="molecule type" value="Genomic_DNA"/>
</dbReference>
<dbReference type="EMBL" id="AP014959">
    <property type="protein sequence ID" value="BAS82365.1"/>
    <property type="molecule type" value="Genomic_DNA"/>
</dbReference>
<dbReference type="EMBL" id="CM000140">
    <property type="protein sequence ID" value="EEE58344.1"/>
    <property type="molecule type" value="Genomic_DNA"/>
</dbReference>
<dbReference type="RefSeq" id="XP_015630094.1">
    <property type="nucleotide sequence ID" value="XM_015774608.1"/>
</dbReference>
<dbReference type="SMR" id="Q10RK1"/>
<dbReference type="STRING" id="39947.Q10RK1"/>
<dbReference type="GlyCosmos" id="Q10RK1">
    <property type="glycosylation" value="2 sites, No reported glycans"/>
</dbReference>
<dbReference type="PaxDb" id="39947-Q10RK1"/>
<dbReference type="EnsemblPlants" id="Os03t0156300-00">
    <property type="protein sequence ID" value="Os03t0156300-00"/>
    <property type="gene ID" value="Os03g0156300"/>
</dbReference>
<dbReference type="Gramene" id="Os03t0156300-00">
    <property type="protein sequence ID" value="Os03t0156300-00"/>
    <property type="gene ID" value="Os03g0156300"/>
</dbReference>
<dbReference type="KEGG" id="dosa:Os03g0156300"/>
<dbReference type="eggNOG" id="ENOG502RRPH">
    <property type="taxonomic scope" value="Eukaryota"/>
</dbReference>
<dbReference type="HOGENOM" id="CLU_027462_0_3_1"/>
<dbReference type="InParanoid" id="Q10RK1"/>
<dbReference type="OMA" id="VAFCIAP"/>
<dbReference type="OrthoDB" id="636220at2759"/>
<dbReference type="Proteomes" id="UP000000763">
    <property type="component" value="Chromosome 3"/>
</dbReference>
<dbReference type="Proteomes" id="UP000007752">
    <property type="component" value="Chromosome 3"/>
</dbReference>
<dbReference type="Proteomes" id="UP000059680">
    <property type="component" value="Chromosome 3"/>
</dbReference>
<dbReference type="GO" id="GO:0005576">
    <property type="term" value="C:extracellular region"/>
    <property type="evidence" value="ECO:0007669"/>
    <property type="project" value="UniProtKB-KW"/>
</dbReference>
<dbReference type="GO" id="GO:0016020">
    <property type="term" value="C:membrane"/>
    <property type="evidence" value="ECO:0007669"/>
    <property type="project" value="UniProtKB-SubCell"/>
</dbReference>
<dbReference type="GO" id="GO:0009828">
    <property type="term" value="P:plant-type cell wall loosening"/>
    <property type="evidence" value="ECO:0000250"/>
    <property type="project" value="UniProtKB"/>
</dbReference>
<dbReference type="CDD" id="cd22274">
    <property type="entry name" value="DPBB_EXPA_N"/>
    <property type="match status" value="1"/>
</dbReference>
<dbReference type="Gene3D" id="2.60.40.760">
    <property type="entry name" value="Expansin, cellulose-binding-like domain"/>
    <property type="match status" value="1"/>
</dbReference>
<dbReference type="Gene3D" id="2.40.40.10">
    <property type="entry name" value="RlpA-like domain"/>
    <property type="match status" value="1"/>
</dbReference>
<dbReference type="InterPro" id="IPR007118">
    <property type="entry name" value="Expan_Lol_pI"/>
</dbReference>
<dbReference type="InterPro" id="IPR002963">
    <property type="entry name" value="Expansin"/>
</dbReference>
<dbReference type="InterPro" id="IPR007112">
    <property type="entry name" value="Expansin/allergen_DPBB_dom"/>
</dbReference>
<dbReference type="InterPro" id="IPR007117">
    <property type="entry name" value="Expansin_CBD"/>
</dbReference>
<dbReference type="InterPro" id="IPR036749">
    <property type="entry name" value="Expansin_CBD_sf"/>
</dbReference>
<dbReference type="InterPro" id="IPR009009">
    <property type="entry name" value="RlpA-like_DPBB"/>
</dbReference>
<dbReference type="InterPro" id="IPR036908">
    <property type="entry name" value="RlpA-like_sf"/>
</dbReference>
<dbReference type="PANTHER" id="PTHR31867">
    <property type="entry name" value="EXPANSIN-A15"/>
    <property type="match status" value="1"/>
</dbReference>
<dbReference type="Pfam" id="PF03330">
    <property type="entry name" value="DPBB_1"/>
    <property type="match status" value="1"/>
</dbReference>
<dbReference type="Pfam" id="PF01357">
    <property type="entry name" value="Expansin_C"/>
    <property type="match status" value="1"/>
</dbReference>
<dbReference type="PRINTS" id="PR01226">
    <property type="entry name" value="EXPANSIN"/>
</dbReference>
<dbReference type="PRINTS" id="PR01225">
    <property type="entry name" value="EXPANSNFAMLY"/>
</dbReference>
<dbReference type="SMART" id="SM00837">
    <property type="entry name" value="DPBB_1"/>
    <property type="match status" value="1"/>
</dbReference>
<dbReference type="SUPFAM" id="SSF50685">
    <property type="entry name" value="Barwin-like endoglucanases"/>
    <property type="match status" value="1"/>
</dbReference>
<dbReference type="SUPFAM" id="SSF49590">
    <property type="entry name" value="PHL pollen allergen"/>
    <property type="match status" value="1"/>
</dbReference>
<dbReference type="PROSITE" id="PS50843">
    <property type="entry name" value="EXPANSIN_CBD"/>
    <property type="match status" value="1"/>
</dbReference>
<dbReference type="PROSITE" id="PS50842">
    <property type="entry name" value="EXPANSIN_EG45"/>
    <property type="match status" value="1"/>
</dbReference>
<comment type="function">
    <text evidence="1">May cause loosening and extension of plant cell walls by disrupting non-covalent bonding between cellulose microfibrils and matrix glucans. No enzymatic activity has been found. May be required for rapid internodal elongation in deepwater rice during submergence (By similarity).</text>
</comment>
<comment type="subcellular location">
    <subcellularLocation>
        <location evidence="1">Secreted</location>
        <location evidence="1">Cell wall</location>
    </subcellularLocation>
    <subcellularLocation>
        <location evidence="1">Membrane</location>
        <topology evidence="1">Peripheral membrane protein</topology>
    </subcellularLocation>
</comment>
<comment type="similarity">
    <text evidence="5">Belongs to the expansin family. Expansin A subfamily.</text>
</comment>
<comment type="sequence caution" evidence="5">
    <conflict type="erroneous gene model prediction">
        <sequence resource="EMBL-CDS" id="AAM51839"/>
    </conflict>
</comment>
<comment type="online information" name="EXPANSIN homepage">
    <link uri="https://www.dept.psu.edu/biology/groups/expansins/index.htm"/>
</comment>
<keyword id="KW-0134">Cell wall</keyword>
<keyword id="KW-0961">Cell wall biogenesis/degradation</keyword>
<keyword id="KW-0325">Glycoprotein</keyword>
<keyword id="KW-0472">Membrane</keyword>
<keyword id="KW-1185">Reference proteome</keyword>
<keyword id="KW-0964">Secreted</keyword>
<keyword id="KW-0732">Signal</keyword>
<gene>
    <name type="primary">EXPA20</name>
    <name type="synonym">EXP20</name>
    <name evidence="7" type="ordered locus">Os03g0156300</name>
    <name evidence="6" type="ordered locus">LOC_Os03g06060</name>
    <name evidence="8" type="ORF">OsJ_09463</name>
    <name type="ORF">OSJNBa0011L14.13</name>
</gene>
<evidence type="ECO:0000250" key="1"/>
<evidence type="ECO:0000255" key="2"/>
<evidence type="ECO:0000255" key="3">
    <source>
        <dbReference type="PROSITE-ProRule" id="PRU00078"/>
    </source>
</evidence>
<evidence type="ECO:0000255" key="4">
    <source>
        <dbReference type="PROSITE-ProRule" id="PRU00079"/>
    </source>
</evidence>
<evidence type="ECO:0000305" key="5"/>
<evidence type="ECO:0000312" key="6">
    <source>
        <dbReference type="EMBL" id="ABF94057.1"/>
    </source>
</evidence>
<evidence type="ECO:0000312" key="7">
    <source>
        <dbReference type="EMBL" id="BAF10922.1"/>
    </source>
</evidence>
<evidence type="ECO:0000312" key="8">
    <source>
        <dbReference type="EMBL" id="EEE58344.1"/>
    </source>
</evidence>
<reference key="1">
    <citation type="journal article" date="2002" name="Plant Physiol.">
        <title>Expression of alpha-expansin and expansin-like genes in deepwater rice.</title>
        <authorList>
            <person name="Lee Y."/>
            <person name="Kende H."/>
        </authorList>
    </citation>
    <scope>NUCLEOTIDE SEQUENCE [GENOMIC DNA]</scope>
</reference>
<reference key="2">
    <citation type="journal article" date="2005" name="Mol. Cells">
        <title>Characterization and transcriptional expression of the alpha-expansin gene family in rice.</title>
        <authorList>
            <person name="Shin J.-H."/>
            <person name="Jeong D.-H."/>
            <person name="Park M.C."/>
            <person name="An G."/>
        </authorList>
    </citation>
    <scope>NUCLEOTIDE SEQUENCE [MRNA]</scope>
    <source>
        <strain>cv. Dongjin</strain>
    </source>
</reference>
<reference key="3">
    <citation type="journal article" date="2005" name="Genome Res.">
        <title>Sequence, annotation, and analysis of synteny between rice chromosome 3 and diverged grass species.</title>
        <authorList>
            <consortium name="The rice chromosome 3 sequencing consortium"/>
            <person name="Buell C.R."/>
            <person name="Yuan Q."/>
            <person name="Ouyang S."/>
            <person name="Liu J."/>
            <person name="Zhu W."/>
            <person name="Wang A."/>
            <person name="Maiti R."/>
            <person name="Haas B."/>
            <person name="Wortman J."/>
            <person name="Pertea M."/>
            <person name="Jones K.M."/>
            <person name="Kim M."/>
            <person name="Overton L."/>
            <person name="Tsitrin T."/>
            <person name="Fadrosh D."/>
            <person name="Bera J."/>
            <person name="Weaver B."/>
            <person name="Jin S."/>
            <person name="Johri S."/>
            <person name="Reardon M."/>
            <person name="Webb K."/>
            <person name="Hill J."/>
            <person name="Moffat K."/>
            <person name="Tallon L."/>
            <person name="Van Aken S."/>
            <person name="Lewis M."/>
            <person name="Utterback T."/>
            <person name="Feldblyum T."/>
            <person name="Zismann V."/>
            <person name="Iobst S."/>
            <person name="Hsiao J."/>
            <person name="de Vazeille A.R."/>
            <person name="Salzberg S.L."/>
            <person name="White O."/>
            <person name="Fraser C.M."/>
            <person name="Yu Y."/>
            <person name="Kim H."/>
            <person name="Rambo T."/>
            <person name="Currie J."/>
            <person name="Collura K."/>
            <person name="Kernodle-Thompson S."/>
            <person name="Wei F."/>
            <person name="Kudrna K."/>
            <person name="Ammiraju J.S.S."/>
            <person name="Luo M."/>
            <person name="Goicoechea J.L."/>
            <person name="Wing R.A."/>
            <person name="Henry D."/>
            <person name="Oates R."/>
            <person name="Palmer M."/>
            <person name="Pries G."/>
            <person name="Saski C."/>
            <person name="Simmons J."/>
            <person name="Soderlund C."/>
            <person name="Nelson W."/>
            <person name="de la Bastide M."/>
            <person name="Spiegel L."/>
            <person name="Nascimento L."/>
            <person name="Huang E."/>
            <person name="Preston R."/>
            <person name="Zutavern T."/>
            <person name="Palmer L."/>
            <person name="O'Shaughnessy A."/>
            <person name="Dike S."/>
            <person name="McCombie W.R."/>
            <person name="Minx P."/>
            <person name="Cordum H."/>
            <person name="Wilson R."/>
            <person name="Jin W."/>
            <person name="Lee H.R."/>
            <person name="Jiang J."/>
            <person name="Jackson S."/>
        </authorList>
    </citation>
    <scope>NUCLEOTIDE SEQUENCE [LARGE SCALE GENOMIC DNA]</scope>
    <source>
        <strain>cv. Nipponbare</strain>
    </source>
</reference>
<reference key="4">
    <citation type="journal article" date="2005" name="Nature">
        <title>The map-based sequence of the rice genome.</title>
        <authorList>
            <consortium name="International rice genome sequencing project (IRGSP)"/>
        </authorList>
    </citation>
    <scope>NUCLEOTIDE SEQUENCE [LARGE SCALE GENOMIC DNA]</scope>
    <source>
        <strain>cv. Nipponbare</strain>
    </source>
</reference>
<reference key="5">
    <citation type="journal article" date="2008" name="Nucleic Acids Res.">
        <title>The rice annotation project database (RAP-DB): 2008 update.</title>
        <authorList>
            <consortium name="The rice annotation project (RAP)"/>
        </authorList>
    </citation>
    <scope>GENOME REANNOTATION</scope>
    <source>
        <strain>cv. Nipponbare</strain>
    </source>
</reference>
<reference key="6">
    <citation type="journal article" date="2013" name="Rice">
        <title>Improvement of the Oryza sativa Nipponbare reference genome using next generation sequence and optical map data.</title>
        <authorList>
            <person name="Kawahara Y."/>
            <person name="de la Bastide M."/>
            <person name="Hamilton J.P."/>
            <person name="Kanamori H."/>
            <person name="McCombie W.R."/>
            <person name="Ouyang S."/>
            <person name="Schwartz D.C."/>
            <person name="Tanaka T."/>
            <person name="Wu J."/>
            <person name="Zhou S."/>
            <person name="Childs K.L."/>
            <person name="Davidson R.M."/>
            <person name="Lin H."/>
            <person name="Quesada-Ocampo L."/>
            <person name="Vaillancourt B."/>
            <person name="Sakai H."/>
            <person name="Lee S.S."/>
            <person name="Kim J."/>
            <person name="Numa H."/>
            <person name="Itoh T."/>
            <person name="Buell C.R."/>
            <person name="Matsumoto T."/>
        </authorList>
    </citation>
    <scope>GENOME REANNOTATION</scope>
    <source>
        <strain>cv. Nipponbare</strain>
    </source>
</reference>
<reference key="7">
    <citation type="journal article" date="2005" name="PLoS Biol.">
        <title>The genomes of Oryza sativa: a history of duplications.</title>
        <authorList>
            <person name="Yu J."/>
            <person name="Wang J."/>
            <person name="Lin W."/>
            <person name="Li S."/>
            <person name="Li H."/>
            <person name="Zhou J."/>
            <person name="Ni P."/>
            <person name="Dong W."/>
            <person name="Hu S."/>
            <person name="Zeng C."/>
            <person name="Zhang J."/>
            <person name="Zhang Y."/>
            <person name="Li R."/>
            <person name="Xu Z."/>
            <person name="Li S."/>
            <person name="Li X."/>
            <person name="Zheng H."/>
            <person name="Cong L."/>
            <person name="Lin L."/>
            <person name="Yin J."/>
            <person name="Geng J."/>
            <person name="Li G."/>
            <person name="Shi J."/>
            <person name="Liu J."/>
            <person name="Lv H."/>
            <person name="Li J."/>
            <person name="Wang J."/>
            <person name="Deng Y."/>
            <person name="Ran L."/>
            <person name="Shi X."/>
            <person name="Wang X."/>
            <person name="Wu Q."/>
            <person name="Li C."/>
            <person name="Ren X."/>
            <person name="Wang J."/>
            <person name="Wang X."/>
            <person name="Li D."/>
            <person name="Liu D."/>
            <person name="Zhang X."/>
            <person name="Ji Z."/>
            <person name="Zhao W."/>
            <person name="Sun Y."/>
            <person name="Zhang Z."/>
            <person name="Bao J."/>
            <person name="Han Y."/>
            <person name="Dong L."/>
            <person name="Ji J."/>
            <person name="Chen P."/>
            <person name="Wu S."/>
            <person name="Liu J."/>
            <person name="Xiao Y."/>
            <person name="Bu D."/>
            <person name="Tan J."/>
            <person name="Yang L."/>
            <person name="Ye C."/>
            <person name="Zhang J."/>
            <person name="Xu J."/>
            <person name="Zhou Y."/>
            <person name="Yu Y."/>
            <person name="Zhang B."/>
            <person name="Zhuang S."/>
            <person name="Wei H."/>
            <person name="Liu B."/>
            <person name="Lei M."/>
            <person name="Yu H."/>
            <person name="Li Y."/>
            <person name="Xu H."/>
            <person name="Wei S."/>
            <person name="He X."/>
            <person name="Fang L."/>
            <person name="Zhang Z."/>
            <person name="Zhang Y."/>
            <person name="Huang X."/>
            <person name="Su Z."/>
            <person name="Tong W."/>
            <person name="Li J."/>
            <person name="Tong Z."/>
            <person name="Li S."/>
            <person name="Ye J."/>
            <person name="Wang L."/>
            <person name="Fang L."/>
            <person name="Lei T."/>
            <person name="Chen C.-S."/>
            <person name="Chen H.-C."/>
            <person name="Xu Z."/>
            <person name="Li H."/>
            <person name="Huang H."/>
            <person name="Zhang F."/>
            <person name="Xu H."/>
            <person name="Li N."/>
            <person name="Zhao C."/>
            <person name="Li S."/>
            <person name="Dong L."/>
            <person name="Huang Y."/>
            <person name="Li L."/>
            <person name="Xi Y."/>
            <person name="Qi Q."/>
            <person name="Li W."/>
            <person name="Zhang B."/>
            <person name="Hu W."/>
            <person name="Zhang Y."/>
            <person name="Tian X."/>
            <person name="Jiao Y."/>
            <person name="Liang X."/>
            <person name="Jin J."/>
            <person name="Gao L."/>
            <person name="Zheng W."/>
            <person name="Hao B."/>
            <person name="Liu S.-M."/>
            <person name="Wang W."/>
            <person name="Yuan L."/>
            <person name="Cao M."/>
            <person name="McDermott J."/>
            <person name="Samudrala R."/>
            <person name="Wang J."/>
            <person name="Wong G.K.-S."/>
            <person name="Yang H."/>
        </authorList>
    </citation>
    <scope>NUCLEOTIDE SEQUENCE [LARGE SCALE GENOMIC DNA]</scope>
    <source>
        <strain>cv. Nipponbare</strain>
    </source>
</reference>
<reference key="8">
    <citation type="journal article" date="2004" name="Plant Mol. Biol.">
        <title>Nomenclature for members of the expansin superfamily of genes and proteins.</title>
        <authorList>
            <person name="Kende H."/>
            <person name="Bradford K.J."/>
            <person name="Brummell D.A."/>
            <person name="Cho H.-T."/>
            <person name="Cosgrove D.J."/>
            <person name="Fleming A.J."/>
            <person name="Gehring C."/>
            <person name="Lee Y."/>
            <person name="McQueen-Mason S.J."/>
            <person name="Rose J.K.C."/>
            <person name="Voesenek L.A.C."/>
        </authorList>
    </citation>
    <scope>NOMENCLATURE</scope>
</reference>
<accession>Q10RK1</accession>
<accession>A0A0P0VT77</accession>
<accession>Q0DV16</accession>
<accession>Q4PR46</accession>
<accession>Q8LMP8</accession>
<accession>Q946I2</accession>
<name>EXP20_ORYSJ</name>
<sequence>MGNILLQLLAVVALCIAPARSDWLPGTATFYGGADGSGTMGGACGYGNLYDQRYGINNAALSTPLFNDGASCGQCYLIICDYGKAPDWCKLGKAITVTGTNYGGWCNATRPYFDMSQPAWENIGIYSAGIVPILYQQVKCWRYGGVRFIINGFNYFELVLVTNMAGSGSIVSMSVKGSCTGWIQMTRNWGANWQCLAGLAGQALSFNVTSTGGQTIVFDDAVPAGWSFGQTFSTYHQFDY</sequence>
<proteinExistence type="evidence at transcript level"/>
<protein>
    <recommendedName>
        <fullName>Expansin-A20</fullName>
    </recommendedName>
    <alternativeName>
        <fullName>Alpha-expansin-20</fullName>
    </alternativeName>
    <alternativeName>
        <fullName>OsEXP20</fullName>
    </alternativeName>
    <alternativeName>
        <fullName>OsEXPA20</fullName>
    </alternativeName>
    <alternativeName>
        <fullName>OsaEXPa1.1</fullName>
    </alternativeName>
</protein>
<organism>
    <name type="scientific">Oryza sativa subsp. japonica</name>
    <name type="common">Rice</name>
    <dbReference type="NCBI Taxonomy" id="39947"/>
    <lineage>
        <taxon>Eukaryota</taxon>
        <taxon>Viridiplantae</taxon>
        <taxon>Streptophyta</taxon>
        <taxon>Embryophyta</taxon>
        <taxon>Tracheophyta</taxon>
        <taxon>Spermatophyta</taxon>
        <taxon>Magnoliopsida</taxon>
        <taxon>Liliopsida</taxon>
        <taxon>Poales</taxon>
        <taxon>Poaceae</taxon>
        <taxon>BOP clade</taxon>
        <taxon>Oryzoideae</taxon>
        <taxon>Oryzeae</taxon>
        <taxon>Oryzinae</taxon>
        <taxon>Oryza</taxon>
        <taxon>Oryza sativa</taxon>
    </lineage>
</organism>
<feature type="signal peptide" evidence="2">
    <location>
        <begin position="1"/>
        <end position="21"/>
    </location>
</feature>
<feature type="chain" id="PRO_0000251999" description="Expansin-A20">
    <location>
        <begin position="22"/>
        <end position="240"/>
    </location>
</feature>
<feature type="domain" description="Expansin-like EG45" evidence="4">
    <location>
        <begin position="41"/>
        <end position="145"/>
    </location>
</feature>
<feature type="domain" description="Expansin-like CBD" evidence="3">
    <location>
        <begin position="155"/>
        <end position="234"/>
    </location>
</feature>
<feature type="glycosylation site" description="N-linked (GlcNAc...) asparagine" evidence="2">
    <location>
        <position position="107"/>
    </location>
</feature>
<feature type="glycosylation site" description="N-linked (GlcNAc...) asparagine" evidence="2">
    <location>
        <position position="207"/>
    </location>
</feature>
<feature type="sequence conflict" description="In Ref. 1; AAL24491 and 2; AAY63552." evidence="5" ref="1 2">
    <original>A</original>
    <variation>P</variation>
    <location>
        <position position="165"/>
    </location>
</feature>